<sequence>MSIPLYEVLILASILFAMGLACVVAWRANVIMMLIGIEIMLNAVMLTFVGGSAHWGIAEGQVFSLMIMALTSAEVSLALAMVAYLHRRKQSVDTDDFSSMKG</sequence>
<organism>
    <name type="scientific">Geobacter sp. (strain M21)</name>
    <dbReference type="NCBI Taxonomy" id="443144"/>
    <lineage>
        <taxon>Bacteria</taxon>
        <taxon>Pseudomonadati</taxon>
        <taxon>Thermodesulfobacteriota</taxon>
        <taxon>Desulfuromonadia</taxon>
        <taxon>Geobacterales</taxon>
        <taxon>Geobacteraceae</taxon>
        <taxon>Geobacter</taxon>
    </lineage>
</organism>
<keyword id="KW-0997">Cell inner membrane</keyword>
<keyword id="KW-1003">Cell membrane</keyword>
<keyword id="KW-0472">Membrane</keyword>
<keyword id="KW-0520">NAD</keyword>
<keyword id="KW-0874">Quinone</keyword>
<keyword id="KW-1278">Translocase</keyword>
<keyword id="KW-0812">Transmembrane</keyword>
<keyword id="KW-1133">Transmembrane helix</keyword>
<keyword id="KW-0813">Transport</keyword>
<keyword id="KW-0830">Ubiquinone</keyword>
<evidence type="ECO:0000255" key="1">
    <source>
        <dbReference type="HAMAP-Rule" id="MF_01456"/>
    </source>
</evidence>
<protein>
    <recommendedName>
        <fullName evidence="1">NADH-quinone oxidoreductase subunit K 1</fullName>
        <ecNumber evidence="1">7.1.1.-</ecNumber>
    </recommendedName>
    <alternativeName>
        <fullName evidence="1">NADH dehydrogenase I subunit K 1</fullName>
    </alternativeName>
    <alternativeName>
        <fullName evidence="1">NDH-1 subunit K 1</fullName>
    </alternativeName>
</protein>
<name>NUOK1_GEOSM</name>
<comment type="function">
    <text evidence="1">NDH-1 shuttles electrons from NADH, via FMN and iron-sulfur (Fe-S) centers, to quinones in the respiratory chain. The immediate electron acceptor for the enzyme in this species is believed to be ubiquinone. Couples the redox reaction to proton translocation (for every two electrons transferred, four hydrogen ions are translocated across the cytoplasmic membrane), and thus conserves the redox energy in a proton gradient.</text>
</comment>
<comment type="catalytic activity">
    <reaction evidence="1">
        <text>a quinone + NADH + 5 H(+)(in) = a quinol + NAD(+) + 4 H(+)(out)</text>
        <dbReference type="Rhea" id="RHEA:57888"/>
        <dbReference type="ChEBI" id="CHEBI:15378"/>
        <dbReference type="ChEBI" id="CHEBI:24646"/>
        <dbReference type="ChEBI" id="CHEBI:57540"/>
        <dbReference type="ChEBI" id="CHEBI:57945"/>
        <dbReference type="ChEBI" id="CHEBI:132124"/>
    </reaction>
</comment>
<comment type="subunit">
    <text evidence="1">NDH-1 is composed of 14 different subunits. Subunits NuoA, H, J, K, L, M, N constitute the membrane sector of the complex.</text>
</comment>
<comment type="subcellular location">
    <subcellularLocation>
        <location evidence="1">Cell inner membrane</location>
        <topology evidence="1">Multi-pass membrane protein</topology>
    </subcellularLocation>
</comment>
<comment type="similarity">
    <text evidence="1">Belongs to the complex I subunit 4L family.</text>
</comment>
<reference key="1">
    <citation type="submission" date="2009-07" db="EMBL/GenBank/DDBJ databases">
        <title>Complete sequence of Geobacter sp. M21.</title>
        <authorList>
            <consortium name="US DOE Joint Genome Institute"/>
            <person name="Lucas S."/>
            <person name="Copeland A."/>
            <person name="Lapidus A."/>
            <person name="Glavina del Rio T."/>
            <person name="Dalin E."/>
            <person name="Tice H."/>
            <person name="Bruce D."/>
            <person name="Goodwin L."/>
            <person name="Pitluck S."/>
            <person name="Saunders E."/>
            <person name="Brettin T."/>
            <person name="Detter J.C."/>
            <person name="Han C."/>
            <person name="Larimer F."/>
            <person name="Land M."/>
            <person name="Hauser L."/>
            <person name="Kyrpides N."/>
            <person name="Ovchinnikova G."/>
            <person name="Lovley D."/>
        </authorList>
    </citation>
    <scope>NUCLEOTIDE SEQUENCE [LARGE SCALE GENOMIC DNA]</scope>
    <source>
        <strain>M21</strain>
    </source>
</reference>
<dbReference type="EC" id="7.1.1.-" evidence="1"/>
<dbReference type="EMBL" id="CP001661">
    <property type="protein sequence ID" value="ACT16237.1"/>
    <property type="molecule type" value="Genomic_DNA"/>
</dbReference>
<dbReference type="SMR" id="C6E8U8"/>
<dbReference type="STRING" id="443144.GM21_0152"/>
<dbReference type="KEGG" id="gem:GM21_0152"/>
<dbReference type="eggNOG" id="COG0713">
    <property type="taxonomic scope" value="Bacteria"/>
</dbReference>
<dbReference type="HOGENOM" id="CLU_144724_0_1_7"/>
<dbReference type="OrthoDB" id="9810120at2"/>
<dbReference type="GO" id="GO:0030964">
    <property type="term" value="C:NADH dehydrogenase complex"/>
    <property type="evidence" value="ECO:0007669"/>
    <property type="project" value="TreeGrafter"/>
</dbReference>
<dbReference type="GO" id="GO:0005886">
    <property type="term" value="C:plasma membrane"/>
    <property type="evidence" value="ECO:0007669"/>
    <property type="project" value="UniProtKB-SubCell"/>
</dbReference>
<dbReference type="GO" id="GO:0050136">
    <property type="term" value="F:NADH:ubiquinone reductase (non-electrogenic) activity"/>
    <property type="evidence" value="ECO:0007669"/>
    <property type="project" value="UniProtKB-UniRule"/>
</dbReference>
<dbReference type="GO" id="GO:0048038">
    <property type="term" value="F:quinone binding"/>
    <property type="evidence" value="ECO:0007669"/>
    <property type="project" value="UniProtKB-KW"/>
</dbReference>
<dbReference type="GO" id="GO:0042773">
    <property type="term" value="P:ATP synthesis coupled electron transport"/>
    <property type="evidence" value="ECO:0007669"/>
    <property type="project" value="InterPro"/>
</dbReference>
<dbReference type="FunFam" id="1.10.287.3510:FF:000001">
    <property type="entry name" value="NADH-quinone oxidoreductase subunit K"/>
    <property type="match status" value="1"/>
</dbReference>
<dbReference type="Gene3D" id="1.10.287.3510">
    <property type="match status" value="1"/>
</dbReference>
<dbReference type="HAMAP" id="MF_01456">
    <property type="entry name" value="NDH1_NuoK"/>
    <property type="match status" value="1"/>
</dbReference>
<dbReference type="InterPro" id="IPR001133">
    <property type="entry name" value="NADH_UbQ_OxRdtase_chain4L/K"/>
</dbReference>
<dbReference type="InterPro" id="IPR039428">
    <property type="entry name" value="NUOK/Mnh_C1-like"/>
</dbReference>
<dbReference type="NCBIfam" id="NF004320">
    <property type="entry name" value="PRK05715.1-2"/>
    <property type="match status" value="1"/>
</dbReference>
<dbReference type="PANTHER" id="PTHR11434:SF16">
    <property type="entry name" value="NADH-UBIQUINONE OXIDOREDUCTASE CHAIN 4L"/>
    <property type="match status" value="1"/>
</dbReference>
<dbReference type="PANTHER" id="PTHR11434">
    <property type="entry name" value="NADH-UBIQUINONE OXIDOREDUCTASE SUBUNIT ND4L"/>
    <property type="match status" value="1"/>
</dbReference>
<dbReference type="Pfam" id="PF00420">
    <property type="entry name" value="Oxidored_q2"/>
    <property type="match status" value="1"/>
</dbReference>
<feature type="chain" id="PRO_5000487287" description="NADH-quinone oxidoreductase subunit K 1">
    <location>
        <begin position="1"/>
        <end position="102"/>
    </location>
</feature>
<feature type="transmembrane region" description="Helical" evidence="1">
    <location>
        <begin position="5"/>
        <end position="25"/>
    </location>
</feature>
<feature type="transmembrane region" description="Helical" evidence="1">
    <location>
        <begin position="30"/>
        <end position="50"/>
    </location>
</feature>
<feature type="transmembrane region" description="Helical" evidence="1">
    <location>
        <begin position="62"/>
        <end position="82"/>
    </location>
</feature>
<proteinExistence type="inferred from homology"/>
<gene>
    <name evidence="1" type="primary">nuoK1</name>
    <name type="ordered locus">GM21_0152</name>
</gene>
<accession>C6E8U8</accession>